<protein>
    <recommendedName>
        <fullName evidence="1">Large ribosomal subunit protein uL14</fullName>
    </recommendedName>
    <alternativeName>
        <fullName evidence="2">50S ribosomal protein L14</fullName>
    </alternativeName>
</protein>
<sequence length="121" mass="13065">MIQQESRLVVADNSGAKEALCIRVLGGTRRRYASVGDIIVVSVKSVIPSSDIKKGAVSKAVIVRTKKEVRRPDGSYIRFDDNACVLLNAAGDIRGSRIFGPVARELRGTNMKIVSLAPEVL</sequence>
<keyword id="KW-1185">Reference proteome</keyword>
<keyword id="KW-0687">Ribonucleoprotein</keyword>
<keyword id="KW-0689">Ribosomal protein</keyword>
<keyword id="KW-0694">RNA-binding</keyword>
<keyword id="KW-0699">rRNA-binding</keyword>
<comment type="function">
    <text evidence="1">Binds to 23S rRNA. Forms part of two intersubunit bridges in the 70S ribosome.</text>
</comment>
<comment type="subunit">
    <text evidence="1">Part of the 50S ribosomal subunit. Forms a cluster with proteins L3 and L19. In the 70S ribosome, L14 and L19 interact and together make contacts with the 16S rRNA in bridges B5 and B8.</text>
</comment>
<comment type="similarity">
    <text evidence="1">Belongs to the universal ribosomal protein uL14 family.</text>
</comment>
<organism>
    <name type="scientific">Porphyromonas gingivalis (strain ATCC BAA-308 / W83)</name>
    <dbReference type="NCBI Taxonomy" id="242619"/>
    <lineage>
        <taxon>Bacteria</taxon>
        <taxon>Pseudomonadati</taxon>
        <taxon>Bacteroidota</taxon>
        <taxon>Bacteroidia</taxon>
        <taxon>Bacteroidales</taxon>
        <taxon>Porphyromonadaceae</taxon>
        <taxon>Porphyromonas</taxon>
    </lineage>
</organism>
<reference key="1">
    <citation type="journal article" date="2003" name="J. Bacteriol.">
        <title>Complete genome sequence of the oral pathogenic bacterium Porphyromonas gingivalis strain W83.</title>
        <authorList>
            <person name="Nelson K.E."/>
            <person name="Fleischmann R.D."/>
            <person name="DeBoy R.T."/>
            <person name="Paulsen I.T."/>
            <person name="Fouts D.E."/>
            <person name="Eisen J.A."/>
            <person name="Daugherty S.C."/>
            <person name="Dodson R.J."/>
            <person name="Durkin A.S."/>
            <person name="Gwinn M.L."/>
            <person name="Haft D.H."/>
            <person name="Kolonay J.F."/>
            <person name="Nelson W.C."/>
            <person name="Mason T.M."/>
            <person name="Tallon L."/>
            <person name="Gray J."/>
            <person name="Granger D."/>
            <person name="Tettelin H."/>
            <person name="Dong H."/>
            <person name="Galvin J.L."/>
            <person name="Duncan M.J."/>
            <person name="Dewhirst F.E."/>
            <person name="Fraser C.M."/>
        </authorList>
    </citation>
    <scope>NUCLEOTIDE SEQUENCE [LARGE SCALE GENOMIC DNA]</scope>
    <source>
        <strain>ATCC BAA-308 / W83</strain>
    </source>
</reference>
<feature type="chain" id="PRO_1000055665" description="Large ribosomal subunit protein uL14">
    <location>
        <begin position="1"/>
        <end position="121"/>
    </location>
</feature>
<gene>
    <name evidence="1" type="primary">rplN</name>
    <name type="ordered locus">PG_1928</name>
</gene>
<dbReference type="EMBL" id="AE015924">
    <property type="protein sequence ID" value="AAQ66909.1"/>
    <property type="molecule type" value="Genomic_DNA"/>
</dbReference>
<dbReference type="RefSeq" id="WP_004583588.1">
    <property type="nucleotide sequence ID" value="NC_002950.2"/>
</dbReference>
<dbReference type="SMR" id="Q7MTM3"/>
<dbReference type="STRING" id="242619.PG_1928"/>
<dbReference type="EnsemblBacteria" id="AAQ66909">
    <property type="protein sequence ID" value="AAQ66909"/>
    <property type="gene ID" value="PG_1928"/>
</dbReference>
<dbReference type="GeneID" id="29257009"/>
<dbReference type="GeneID" id="57239586"/>
<dbReference type="KEGG" id="pgi:PG_1928"/>
<dbReference type="eggNOG" id="COG0093">
    <property type="taxonomic scope" value="Bacteria"/>
</dbReference>
<dbReference type="HOGENOM" id="CLU_095071_2_1_10"/>
<dbReference type="Proteomes" id="UP000000588">
    <property type="component" value="Chromosome"/>
</dbReference>
<dbReference type="GO" id="GO:0022625">
    <property type="term" value="C:cytosolic large ribosomal subunit"/>
    <property type="evidence" value="ECO:0007669"/>
    <property type="project" value="TreeGrafter"/>
</dbReference>
<dbReference type="GO" id="GO:0070180">
    <property type="term" value="F:large ribosomal subunit rRNA binding"/>
    <property type="evidence" value="ECO:0007669"/>
    <property type="project" value="TreeGrafter"/>
</dbReference>
<dbReference type="GO" id="GO:0003735">
    <property type="term" value="F:structural constituent of ribosome"/>
    <property type="evidence" value="ECO:0007669"/>
    <property type="project" value="InterPro"/>
</dbReference>
<dbReference type="GO" id="GO:0006412">
    <property type="term" value="P:translation"/>
    <property type="evidence" value="ECO:0007669"/>
    <property type="project" value="UniProtKB-UniRule"/>
</dbReference>
<dbReference type="CDD" id="cd00337">
    <property type="entry name" value="Ribosomal_uL14"/>
    <property type="match status" value="1"/>
</dbReference>
<dbReference type="FunFam" id="2.40.150.20:FF:000001">
    <property type="entry name" value="50S ribosomal protein L14"/>
    <property type="match status" value="1"/>
</dbReference>
<dbReference type="Gene3D" id="2.40.150.20">
    <property type="entry name" value="Ribosomal protein L14"/>
    <property type="match status" value="1"/>
</dbReference>
<dbReference type="HAMAP" id="MF_01367">
    <property type="entry name" value="Ribosomal_uL14"/>
    <property type="match status" value="1"/>
</dbReference>
<dbReference type="InterPro" id="IPR000218">
    <property type="entry name" value="Ribosomal_uL14"/>
</dbReference>
<dbReference type="InterPro" id="IPR005745">
    <property type="entry name" value="Ribosomal_uL14_bac-type"/>
</dbReference>
<dbReference type="InterPro" id="IPR019972">
    <property type="entry name" value="Ribosomal_uL14_CS"/>
</dbReference>
<dbReference type="InterPro" id="IPR036853">
    <property type="entry name" value="Ribosomal_uL14_sf"/>
</dbReference>
<dbReference type="NCBIfam" id="TIGR01067">
    <property type="entry name" value="rplN_bact"/>
    <property type="match status" value="1"/>
</dbReference>
<dbReference type="PANTHER" id="PTHR11761">
    <property type="entry name" value="50S/60S RIBOSOMAL PROTEIN L14/L23"/>
    <property type="match status" value="1"/>
</dbReference>
<dbReference type="PANTHER" id="PTHR11761:SF3">
    <property type="entry name" value="LARGE RIBOSOMAL SUBUNIT PROTEIN UL14M"/>
    <property type="match status" value="1"/>
</dbReference>
<dbReference type="Pfam" id="PF00238">
    <property type="entry name" value="Ribosomal_L14"/>
    <property type="match status" value="1"/>
</dbReference>
<dbReference type="SMART" id="SM01374">
    <property type="entry name" value="Ribosomal_L14"/>
    <property type="match status" value="1"/>
</dbReference>
<dbReference type="SUPFAM" id="SSF50193">
    <property type="entry name" value="Ribosomal protein L14"/>
    <property type="match status" value="1"/>
</dbReference>
<dbReference type="PROSITE" id="PS00049">
    <property type="entry name" value="RIBOSOMAL_L14"/>
    <property type="match status" value="1"/>
</dbReference>
<accession>Q7MTM3</accession>
<name>RL14_PORGI</name>
<proteinExistence type="inferred from homology"/>
<evidence type="ECO:0000255" key="1">
    <source>
        <dbReference type="HAMAP-Rule" id="MF_01367"/>
    </source>
</evidence>
<evidence type="ECO:0000305" key="2"/>